<evidence type="ECO:0000255" key="1">
    <source>
        <dbReference type="HAMAP-Rule" id="MF_00281"/>
    </source>
</evidence>
<evidence type="ECO:0000305" key="2"/>
<organism>
    <name type="scientific">Streptococcus thermophilus (strain ATCC BAA-250 / LMG 18311)</name>
    <dbReference type="NCBI Taxonomy" id="264199"/>
    <lineage>
        <taxon>Bacteria</taxon>
        <taxon>Bacillati</taxon>
        <taxon>Bacillota</taxon>
        <taxon>Bacilli</taxon>
        <taxon>Lactobacillales</taxon>
        <taxon>Streptococcaceae</taxon>
        <taxon>Streptococcus</taxon>
    </lineage>
</organism>
<name>SYFA_STRT2</name>
<dbReference type="EC" id="6.1.1.20" evidence="1"/>
<dbReference type="EMBL" id="CP000023">
    <property type="protein sequence ID" value="AAV60925.1"/>
    <property type="status" value="ALT_INIT"/>
    <property type="molecule type" value="Genomic_DNA"/>
</dbReference>
<dbReference type="RefSeq" id="WP_002947433.1">
    <property type="nucleotide sequence ID" value="NC_006448.1"/>
</dbReference>
<dbReference type="SMR" id="Q5M3S5"/>
<dbReference type="STRING" id="264199.stu1294"/>
<dbReference type="GeneID" id="66899080"/>
<dbReference type="KEGG" id="stl:stu1294"/>
<dbReference type="eggNOG" id="COG0016">
    <property type="taxonomic scope" value="Bacteria"/>
</dbReference>
<dbReference type="HOGENOM" id="CLU_025086_0_1_9"/>
<dbReference type="Proteomes" id="UP000001170">
    <property type="component" value="Chromosome"/>
</dbReference>
<dbReference type="GO" id="GO:0005737">
    <property type="term" value="C:cytoplasm"/>
    <property type="evidence" value="ECO:0007669"/>
    <property type="project" value="UniProtKB-SubCell"/>
</dbReference>
<dbReference type="GO" id="GO:0005524">
    <property type="term" value="F:ATP binding"/>
    <property type="evidence" value="ECO:0007669"/>
    <property type="project" value="UniProtKB-UniRule"/>
</dbReference>
<dbReference type="GO" id="GO:0140096">
    <property type="term" value="F:catalytic activity, acting on a protein"/>
    <property type="evidence" value="ECO:0007669"/>
    <property type="project" value="UniProtKB-ARBA"/>
</dbReference>
<dbReference type="GO" id="GO:0000287">
    <property type="term" value="F:magnesium ion binding"/>
    <property type="evidence" value="ECO:0007669"/>
    <property type="project" value="UniProtKB-UniRule"/>
</dbReference>
<dbReference type="GO" id="GO:0004826">
    <property type="term" value="F:phenylalanine-tRNA ligase activity"/>
    <property type="evidence" value="ECO:0007669"/>
    <property type="project" value="UniProtKB-UniRule"/>
</dbReference>
<dbReference type="GO" id="GO:0016740">
    <property type="term" value="F:transferase activity"/>
    <property type="evidence" value="ECO:0007669"/>
    <property type="project" value="UniProtKB-ARBA"/>
</dbReference>
<dbReference type="GO" id="GO:0000049">
    <property type="term" value="F:tRNA binding"/>
    <property type="evidence" value="ECO:0007669"/>
    <property type="project" value="InterPro"/>
</dbReference>
<dbReference type="GO" id="GO:0006432">
    <property type="term" value="P:phenylalanyl-tRNA aminoacylation"/>
    <property type="evidence" value="ECO:0007669"/>
    <property type="project" value="UniProtKB-UniRule"/>
</dbReference>
<dbReference type="CDD" id="cd00496">
    <property type="entry name" value="PheRS_alpha_core"/>
    <property type="match status" value="1"/>
</dbReference>
<dbReference type="FunFam" id="3.30.930.10:FF:000003">
    <property type="entry name" value="Phenylalanine--tRNA ligase alpha subunit"/>
    <property type="match status" value="1"/>
</dbReference>
<dbReference type="Gene3D" id="3.30.930.10">
    <property type="entry name" value="Bira Bifunctional Protein, Domain 2"/>
    <property type="match status" value="1"/>
</dbReference>
<dbReference type="HAMAP" id="MF_00281">
    <property type="entry name" value="Phe_tRNA_synth_alpha1"/>
    <property type="match status" value="1"/>
</dbReference>
<dbReference type="InterPro" id="IPR006195">
    <property type="entry name" value="aa-tRNA-synth_II"/>
</dbReference>
<dbReference type="InterPro" id="IPR045864">
    <property type="entry name" value="aa-tRNA-synth_II/BPL/LPL"/>
</dbReference>
<dbReference type="InterPro" id="IPR004529">
    <property type="entry name" value="Phe-tRNA-synth_IIc_asu"/>
</dbReference>
<dbReference type="InterPro" id="IPR004188">
    <property type="entry name" value="Phe-tRNA_ligase_II_N"/>
</dbReference>
<dbReference type="InterPro" id="IPR022911">
    <property type="entry name" value="Phe_tRNA_ligase_alpha1_bac"/>
</dbReference>
<dbReference type="InterPro" id="IPR002319">
    <property type="entry name" value="Phenylalanyl-tRNA_Synthase"/>
</dbReference>
<dbReference type="InterPro" id="IPR010978">
    <property type="entry name" value="tRNA-bd_arm"/>
</dbReference>
<dbReference type="NCBIfam" id="TIGR00468">
    <property type="entry name" value="pheS"/>
    <property type="match status" value="1"/>
</dbReference>
<dbReference type="PANTHER" id="PTHR11538:SF41">
    <property type="entry name" value="PHENYLALANINE--TRNA LIGASE, MITOCHONDRIAL"/>
    <property type="match status" value="1"/>
</dbReference>
<dbReference type="PANTHER" id="PTHR11538">
    <property type="entry name" value="PHENYLALANYL-TRNA SYNTHETASE"/>
    <property type="match status" value="1"/>
</dbReference>
<dbReference type="Pfam" id="PF02912">
    <property type="entry name" value="Phe_tRNA-synt_N"/>
    <property type="match status" value="1"/>
</dbReference>
<dbReference type="Pfam" id="PF01409">
    <property type="entry name" value="tRNA-synt_2d"/>
    <property type="match status" value="1"/>
</dbReference>
<dbReference type="SUPFAM" id="SSF55681">
    <property type="entry name" value="Class II aaRS and biotin synthetases"/>
    <property type="match status" value="1"/>
</dbReference>
<dbReference type="SUPFAM" id="SSF46589">
    <property type="entry name" value="tRNA-binding arm"/>
    <property type="match status" value="1"/>
</dbReference>
<dbReference type="PROSITE" id="PS50862">
    <property type="entry name" value="AA_TRNA_LIGASE_II"/>
    <property type="match status" value="1"/>
</dbReference>
<reference key="1">
    <citation type="journal article" date="2004" name="Nat. Biotechnol.">
        <title>Complete sequence and comparative genome analysis of the dairy bacterium Streptococcus thermophilus.</title>
        <authorList>
            <person name="Bolotin A."/>
            <person name="Quinquis B."/>
            <person name="Renault P."/>
            <person name="Sorokin A."/>
            <person name="Ehrlich S.D."/>
            <person name="Kulakauskas S."/>
            <person name="Lapidus A."/>
            <person name="Goltsman E."/>
            <person name="Mazur M."/>
            <person name="Pusch G.D."/>
            <person name="Fonstein M."/>
            <person name="Overbeek R."/>
            <person name="Kyprides N."/>
            <person name="Purnelle B."/>
            <person name="Prozzi D."/>
            <person name="Ngui K."/>
            <person name="Masuy D."/>
            <person name="Hancy F."/>
            <person name="Burteau S."/>
            <person name="Boutry M."/>
            <person name="Delcour J."/>
            <person name="Goffeau A."/>
            <person name="Hols P."/>
        </authorList>
    </citation>
    <scope>NUCLEOTIDE SEQUENCE [LARGE SCALE GENOMIC DNA]</scope>
    <source>
        <strain>ATCC BAA-250 / LMG 18311</strain>
    </source>
</reference>
<protein>
    <recommendedName>
        <fullName evidence="1">Phenylalanine--tRNA ligase alpha subunit</fullName>
        <ecNumber evidence="1">6.1.1.20</ecNumber>
    </recommendedName>
    <alternativeName>
        <fullName evidence="1">Phenylalanyl-tRNA synthetase alpha subunit</fullName>
        <shortName evidence="1">PheRS</shortName>
    </alternativeName>
</protein>
<keyword id="KW-0030">Aminoacyl-tRNA synthetase</keyword>
<keyword id="KW-0067">ATP-binding</keyword>
<keyword id="KW-0963">Cytoplasm</keyword>
<keyword id="KW-0436">Ligase</keyword>
<keyword id="KW-0460">Magnesium</keyword>
<keyword id="KW-0479">Metal-binding</keyword>
<keyword id="KW-0547">Nucleotide-binding</keyword>
<keyword id="KW-0648">Protein biosynthesis</keyword>
<keyword id="KW-1185">Reference proteome</keyword>
<gene>
    <name evidence="1" type="primary">pheS</name>
    <name type="ordered locus">stu1294</name>
</gene>
<comment type="catalytic activity">
    <reaction evidence="1">
        <text>tRNA(Phe) + L-phenylalanine + ATP = L-phenylalanyl-tRNA(Phe) + AMP + diphosphate + H(+)</text>
        <dbReference type="Rhea" id="RHEA:19413"/>
        <dbReference type="Rhea" id="RHEA-COMP:9668"/>
        <dbReference type="Rhea" id="RHEA-COMP:9699"/>
        <dbReference type="ChEBI" id="CHEBI:15378"/>
        <dbReference type="ChEBI" id="CHEBI:30616"/>
        <dbReference type="ChEBI" id="CHEBI:33019"/>
        <dbReference type="ChEBI" id="CHEBI:58095"/>
        <dbReference type="ChEBI" id="CHEBI:78442"/>
        <dbReference type="ChEBI" id="CHEBI:78531"/>
        <dbReference type="ChEBI" id="CHEBI:456215"/>
        <dbReference type="EC" id="6.1.1.20"/>
    </reaction>
</comment>
<comment type="cofactor">
    <cofactor evidence="1">
        <name>Mg(2+)</name>
        <dbReference type="ChEBI" id="CHEBI:18420"/>
    </cofactor>
    <text evidence="1">Binds 2 magnesium ions per tetramer.</text>
</comment>
<comment type="subunit">
    <text evidence="1">Tetramer of two alpha and two beta subunits.</text>
</comment>
<comment type="subcellular location">
    <subcellularLocation>
        <location evidence="1">Cytoplasm</location>
    </subcellularLocation>
</comment>
<comment type="similarity">
    <text evidence="1">Belongs to the class-II aminoacyl-tRNA synthetase family. Phe-tRNA synthetase alpha subunit type 1 subfamily.</text>
</comment>
<comment type="sequence caution" evidence="2">
    <conflict type="erroneous initiation">
        <sequence resource="EMBL-CDS" id="AAV60925"/>
    </conflict>
</comment>
<sequence length="347" mass="39171">MDLQTQLQELKTSTQAKLAEMRGEHSKELQELRVAVLGKKGSLTELLKGLKDLPSEERPTVGKMVNEVRDVLTEAFDEAAKVVEAAKIQAQLDSESLDVTLPGRQVNLGNRHILSQIAEEIEDIFLGMGFQIVDGFEVETDYYNFERMNLPKDHPARDMQDTFYITEEILLRTHTSPVQARTLDKHDFSKGPLKMISPGRVFRRDTDDATHSHQFHQIEGLVVGKNISMGDLKGTLEMIIQKMFGAERQIRLRPSYFPFTEPSVEVDVSCFKCGGKGCNVCKKTGWIEILGAGMVHPQVLEMSGVDSEEYSGFAFGLGQERIAMLRYGINDIRSFYQGDVRFSEQFK</sequence>
<feature type="chain" id="PRO_0000232031" description="Phenylalanine--tRNA ligase alpha subunit">
    <location>
        <begin position="1"/>
        <end position="347"/>
    </location>
</feature>
<feature type="binding site" evidence="1">
    <location>
        <position position="261"/>
    </location>
    <ligand>
        <name>Mg(2+)</name>
        <dbReference type="ChEBI" id="CHEBI:18420"/>
        <note>shared with beta subunit</note>
    </ligand>
</feature>
<accession>Q5M3S5</accession>
<proteinExistence type="inferred from homology"/>